<reference key="1">
    <citation type="journal article" date="2005" name="Nucleic Acids Res.">
        <title>Genome dynamics and diversity of Shigella species, the etiologic agents of bacillary dysentery.</title>
        <authorList>
            <person name="Yang F."/>
            <person name="Yang J."/>
            <person name="Zhang X."/>
            <person name="Chen L."/>
            <person name="Jiang Y."/>
            <person name="Yan Y."/>
            <person name="Tang X."/>
            <person name="Wang J."/>
            <person name="Xiong Z."/>
            <person name="Dong J."/>
            <person name="Xue Y."/>
            <person name="Zhu Y."/>
            <person name="Xu X."/>
            <person name="Sun L."/>
            <person name="Chen S."/>
            <person name="Nie H."/>
            <person name="Peng J."/>
            <person name="Xu J."/>
            <person name="Wang Y."/>
            <person name="Yuan Z."/>
            <person name="Wen Y."/>
            <person name="Yao Z."/>
            <person name="Shen Y."/>
            <person name="Qiang B."/>
            <person name="Hou Y."/>
            <person name="Yu J."/>
            <person name="Jin Q."/>
        </authorList>
    </citation>
    <scope>NUCLEOTIDE SEQUENCE [LARGE SCALE GENOMIC DNA]</scope>
    <source>
        <strain>Sd197</strain>
    </source>
</reference>
<protein>
    <recommendedName>
        <fullName evidence="1">Putative carbamate hydrolase RutD</fullName>
        <ecNumber evidence="1">3.5.1.-</ecNumber>
    </recommendedName>
    <alternativeName>
        <fullName evidence="1">Aminohydrolase</fullName>
    </alternativeName>
</protein>
<dbReference type="EC" id="3.5.1.-" evidence="1"/>
<dbReference type="EMBL" id="CP000034">
    <property type="protein sequence ID" value="ABB61153.1"/>
    <property type="molecule type" value="Genomic_DNA"/>
</dbReference>
<dbReference type="RefSeq" id="YP_402644.1">
    <property type="nucleotide sequence ID" value="NC_007606.1"/>
</dbReference>
<dbReference type="SMR" id="Q32HQ2"/>
<dbReference type="STRING" id="300267.SDY_0984"/>
<dbReference type="ESTHER" id="shifl-YCDJ">
    <property type="family name" value="RutD"/>
</dbReference>
<dbReference type="EnsemblBacteria" id="ABB61153">
    <property type="protein sequence ID" value="ABB61153"/>
    <property type="gene ID" value="SDY_0984"/>
</dbReference>
<dbReference type="KEGG" id="sdy:SDY_0984"/>
<dbReference type="PATRIC" id="fig|300267.13.peg.1144"/>
<dbReference type="HOGENOM" id="CLU_020336_50_1_6"/>
<dbReference type="Proteomes" id="UP000002716">
    <property type="component" value="Chromosome"/>
</dbReference>
<dbReference type="GO" id="GO:0016020">
    <property type="term" value="C:membrane"/>
    <property type="evidence" value="ECO:0007669"/>
    <property type="project" value="TreeGrafter"/>
</dbReference>
<dbReference type="GO" id="GO:0016811">
    <property type="term" value="F:hydrolase activity, acting on carbon-nitrogen (but not peptide) bonds, in linear amides"/>
    <property type="evidence" value="ECO:0007669"/>
    <property type="project" value="InterPro"/>
</dbReference>
<dbReference type="GO" id="GO:0047372">
    <property type="term" value="F:monoacylglycerol lipase activity"/>
    <property type="evidence" value="ECO:0007669"/>
    <property type="project" value="TreeGrafter"/>
</dbReference>
<dbReference type="GO" id="GO:0046464">
    <property type="term" value="P:acylglycerol catabolic process"/>
    <property type="evidence" value="ECO:0007669"/>
    <property type="project" value="TreeGrafter"/>
</dbReference>
<dbReference type="GO" id="GO:0019740">
    <property type="term" value="P:nitrogen utilization"/>
    <property type="evidence" value="ECO:0007669"/>
    <property type="project" value="UniProtKB-UniRule"/>
</dbReference>
<dbReference type="GO" id="GO:0006212">
    <property type="term" value="P:uracil catabolic process"/>
    <property type="evidence" value="ECO:0007669"/>
    <property type="project" value="UniProtKB-UniRule"/>
</dbReference>
<dbReference type="Gene3D" id="3.40.50.1820">
    <property type="entry name" value="alpha/beta hydrolase"/>
    <property type="match status" value="1"/>
</dbReference>
<dbReference type="HAMAP" id="MF_00832">
    <property type="entry name" value="RutD"/>
    <property type="match status" value="1"/>
</dbReference>
<dbReference type="InterPro" id="IPR000073">
    <property type="entry name" value="AB_hydrolase_1"/>
</dbReference>
<dbReference type="InterPro" id="IPR029058">
    <property type="entry name" value="AB_hydrolase_fold"/>
</dbReference>
<dbReference type="InterPro" id="IPR050266">
    <property type="entry name" value="AB_hydrolase_sf"/>
</dbReference>
<dbReference type="InterPro" id="IPR019913">
    <property type="entry name" value="Pyrimidine_utilisation_RutD"/>
</dbReference>
<dbReference type="NCBIfam" id="TIGR03611">
    <property type="entry name" value="RutD"/>
    <property type="match status" value="1"/>
</dbReference>
<dbReference type="PANTHER" id="PTHR43798">
    <property type="entry name" value="MONOACYLGLYCEROL LIPASE"/>
    <property type="match status" value="1"/>
</dbReference>
<dbReference type="PANTHER" id="PTHR43798:SF5">
    <property type="entry name" value="MONOACYLGLYCEROL LIPASE ABHD6"/>
    <property type="match status" value="1"/>
</dbReference>
<dbReference type="Pfam" id="PF00561">
    <property type="entry name" value="Abhydrolase_1"/>
    <property type="match status" value="1"/>
</dbReference>
<dbReference type="PRINTS" id="PR00111">
    <property type="entry name" value="ABHYDROLASE"/>
</dbReference>
<dbReference type="SUPFAM" id="SSF53474">
    <property type="entry name" value="alpha/beta-Hydrolases"/>
    <property type="match status" value="1"/>
</dbReference>
<gene>
    <name evidence="1" type="primary">rutD</name>
    <name type="ordered locus">SDY_0984</name>
</gene>
<organism>
    <name type="scientific">Shigella dysenteriae serotype 1 (strain Sd197)</name>
    <dbReference type="NCBI Taxonomy" id="300267"/>
    <lineage>
        <taxon>Bacteria</taxon>
        <taxon>Pseudomonadati</taxon>
        <taxon>Pseudomonadota</taxon>
        <taxon>Gammaproteobacteria</taxon>
        <taxon>Enterobacterales</taxon>
        <taxon>Enterobacteriaceae</taxon>
        <taxon>Shigella</taxon>
    </lineage>
</organism>
<sequence>MKLSLSPPPYADAPVVVLISGLGGSGSYWLPQLAVLEQEYQVVCYDQRGTGNNPDTLAEDYSIAQMAAELHQALVAAGIEHYAVVGHALGALVGMQLALDYPASVTVLVSVNGWLRINAHTRRCFQVRERLLYSGGAQAWVEAQPLFLYPADWMAARAPRLEAEDALALAHFQGKNNLLRRLNALKRADFSHHADRIRCPVQIICASDDLLVPSACSSELHAAL</sequence>
<comment type="function">
    <text evidence="1">Involved in pyrimidine catabolism. May facilitate the hydrolysis of carbamate, a reaction that can also occur spontaneously.</text>
</comment>
<comment type="catalytic activity">
    <reaction evidence="1">
        <text>carbamate + 2 H(+) = NH4(+) + CO2</text>
        <dbReference type="Rhea" id="RHEA:15649"/>
        <dbReference type="ChEBI" id="CHEBI:13941"/>
        <dbReference type="ChEBI" id="CHEBI:15378"/>
        <dbReference type="ChEBI" id="CHEBI:16526"/>
        <dbReference type="ChEBI" id="CHEBI:28938"/>
    </reaction>
</comment>
<comment type="similarity">
    <text evidence="1">Belongs to the AB hydrolase superfamily. Hydrolase RutD family.</text>
</comment>
<keyword id="KW-0378">Hydrolase</keyword>
<keyword id="KW-1185">Reference proteome</keyword>
<feature type="chain" id="PRO_0000402981" description="Putative carbamate hydrolase RutD">
    <location>
        <begin position="1"/>
        <end position="224"/>
    </location>
</feature>
<feature type="domain" description="AB hydrolase-1" evidence="1">
    <location>
        <begin position="14"/>
        <end position="115"/>
    </location>
</feature>
<name>RUTD_SHIDS</name>
<accession>Q32HQ2</accession>
<proteinExistence type="inferred from homology"/>
<evidence type="ECO:0000255" key="1">
    <source>
        <dbReference type="HAMAP-Rule" id="MF_00832"/>
    </source>
</evidence>